<accession>Q820S1</accession>
<reference key="1">
    <citation type="journal article" date="2003" name="J. Bacteriol.">
        <title>Complete genome sequence of the ammonia-oxidizing bacterium and obligate chemolithoautotroph Nitrosomonas europaea.</title>
        <authorList>
            <person name="Chain P."/>
            <person name="Lamerdin J.E."/>
            <person name="Larimer F.W."/>
            <person name="Regala W."/>
            <person name="Lao V."/>
            <person name="Land M.L."/>
            <person name="Hauser L."/>
            <person name="Hooper A.B."/>
            <person name="Klotz M.G."/>
            <person name="Norton J."/>
            <person name="Sayavedra-Soto L.A."/>
            <person name="Arciero D.M."/>
            <person name="Hommes N.G."/>
            <person name="Whittaker M.M."/>
            <person name="Arp D.J."/>
        </authorList>
    </citation>
    <scope>NUCLEOTIDE SEQUENCE [LARGE SCALE GENOMIC DNA]</scope>
    <source>
        <strain>ATCC 19718 / CIP 103999 / KCTC 2705 / NBRC 14298</strain>
    </source>
</reference>
<proteinExistence type="inferred from homology"/>
<feature type="chain" id="PRO_0000405548" description="Phosphate acetyltransferase">
    <location>
        <begin position="1"/>
        <end position="695"/>
    </location>
</feature>
<feature type="region of interest" description="Phosphate acetyltransferase">
    <location>
        <begin position="372"/>
        <end position="695"/>
    </location>
</feature>
<sequence length="695" mass="74998">MHTFFVTSTGFGVGLTSTSLGLVRALEYGGLKAGFYKPVAQQHPGNSKLEYSTELISRTLGLAPPAPLPLATVEHLLGEGQIDDLMEDIVRRFKQASEGYDVMVVEGMVPTRHVSYASRVNTRLASSLDADIILVSSAEDDALQAITDRIEIQAQFFGGAQNPRLLGVILNKIRTDHSDDLFEQLKNHSTLFHQSSFQILGCIPWEDSLNAPRMADVVTQLQAQIVNAGDSEKRRVQDIVLFASAAPNSVTLLRPGVLVVTPGDRDDIVMAASLAVLNGVPLAGLLLCSDFPPDPRVLELCKGALTKGLPVCTVTTNSYDTAANLHRMNREIPLDDHERAERITNFVANHIRQELLVKRCGEPQEQRLSPPAFRYRLVKRAQEADCRIVLPEGYEPRTIQAATICQERGIARCVLLAKPDAVKAVASARGITLPEGLEMIDPEKVRRNYVAAMVELRKHKGLNEPMALAQLEDNVVLGTMMLATGEVDGLVSGAINTTANTIRPALQLIKTAPGFKLVSSVFFMLLPEQVVVYGDCAVNPNPTAEELADIALQSAASAQALGIEPRVAMLSYSTGDSGSGQEVEKVREATRLARLARPDLLIDGPLQYDAAAIASVGRQKAPGSPVAGRATVFIFPDLNTGNTTYKAVQRSANVVSVGPMLQGLRKPVNDLSRGASVEDIVYTIALTAVQAASQR</sequence>
<protein>
    <recommendedName>
        <fullName>Phosphate acetyltransferase</fullName>
        <ecNumber>2.3.1.8</ecNumber>
    </recommendedName>
    <alternativeName>
        <fullName>Phosphotransacetylase</fullName>
    </alternativeName>
</protein>
<name>PTA_NITEU</name>
<gene>
    <name type="primary">pta</name>
    <name type="ordered locus">NE0298</name>
</gene>
<evidence type="ECO:0000250" key="1"/>
<evidence type="ECO:0000305" key="2"/>
<keyword id="KW-0012">Acyltransferase</keyword>
<keyword id="KW-0963">Cytoplasm</keyword>
<keyword id="KW-1185">Reference proteome</keyword>
<keyword id="KW-0808">Transferase</keyword>
<comment type="function">
    <text evidence="1">Involved in acetate metabolism.</text>
</comment>
<comment type="catalytic activity">
    <reaction>
        <text>acetyl-CoA + phosphate = acetyl phosphate + CoA</text>
        <dbReference type="Rhea" id="RHEA:19521"/>
        <dbReference type="ChEBI" id="CHEBI:22191"/>
        <dbReference type="ChEBI" id="CHEBI:43474"/>
        <dbReference type="ChEBI" id="CHEBI:57287"/>
        <dbReference type="ChEBI" id="CHEBI:57288"/>
        <dbReference type="EC" id="2.3.1.8"/>
    </reaction>
</comment>
<comment type="pathway">
    <text>Metabolic intermediate biosynthesis; acetyl-CoA biosynthesis; acetyl-CoA from acetate: step 2/2.</text>
</comment>
<comment type="subunit">
    <text evidence="1">Homohexamer.</text>
</comment>
<comment type="subcellular location">
    <subcellularLocation>
        <location evidence="2">Cytoplasm</location>
    </subcellularLocation>
</comment>
<comment type="domain">
    <text evidence="1">The N-terminal region seems to be important for proper quaternary structure. The C-terminal region contains the substrate-binding site (By similarity).</text>
</comment>
<comment type="similarity">
    <text evidence="2">In the N-terminal section; belongs to the CobB/CobQ family.</text>
</comment>
<comment type="similarity">
    <text evidence="2">In the C-terminal section; belongs to the phosphate acetyltransferase and butyryltransferase family.</text>
</comment>
<dbReference type="EC" id="2.3.1.8"/>
<dbReference type="EMBL" id="AL954747">
    <property type="protein sequence ID" value="CAD84209.1"/>
    <property type="molecule type" value="Genomic_DNA"/>
</dbReference>
<dbReference type="RefSeq" id="WP_011110933.1">
    <property type="nucleotide sequence ID" value="NC_004757.1"/>
</dbReference>
<dbReference type="SMR" id="Q820S1"/>
<dbReference type="STRING" id="228410.NE0298"/>
<dbReference type="GeneID" id="87103504"/>
<dbReference type="KEGG" id="neu:NE0298"/>
<dbReference type="eggNOG" id="COG0280">
    <property type="taxonomic scope" value="Bacteria"/>
</dbReference>
<dbReference type="eggNOG" id="COG0857">
    <property type="taxonomic scope" value="Bacteria"/>
</dbReference>
<dbReference type="HOGENOM" id="CLU_019723_2_1_4"/>
<dbReference type="OrthoDB" id="9808984at2"/>
<dbReference type="PhylomeDB" id="Q820S1"/>
<dbReference type="UniPathway" id="UPA00340">
    <property type="reaction ID" value="UER00459"/>
</dbReference>
<dbReference type="Proteomes" id="UP000001416">
    <property type="component" value="Chromosome"/>
</dbReference>
<dbReference type="GO" id="GO:0005737">
    <property type="term" value="C:cytoplasm"/>
    <property type="evidence" value="ECO:0007669"/>
    <property type="project" value="UniProtKB-SubCell"/>
</dbReference>
<dbReference type="GO" id="GO:0008959">
    <property type="term" value="F:phosphate acetyltransferase activity"/>
    <property type="evidence" value="ECO:0007669"/>
    <property type="project" value="UniProtKB-EC"/>
</dbReference>
<dbReference type="GO" id="GO:0006085">
    <property type="term" value="P:acetyl-CoA biosynthetic process"/>
    <property type="evidence" value="ECO:0007669"/>
    <property type="project" value="UniProtKB-UniPathway"/>
</dbReference>
<dbReference type="CDD" id="cd03109">
    <property type="entry name" value="DTBS"/>
    <property type="match status" value="1"/>
</dbReference>
<dbReference type="FunFam" id="3.40.50.10750:FF:000001">
    <property type="entry name" value="Phosphate acetyltransferase"/>
    <property type="match status" value="1"/>
</dbReference>
<dbReference type="Gene3D" id="3.40.50.10950">
    <property type="match status" value="1"/>
</dbReference>
<dbReference type="Gene3D" id="3.40.1390.20">
    <property type="entry name" value="HprK N-terminal domain-like"/>
    <property type="match status" value="1"/>
</dbReference>
<dbReference type="Gene3D" id="3.40.50.10750">
    <property type="entry name" value="Isocitrate/Isopropylmalate dehydrogenase-like"/>
    <property type="match status" value="1"/>
</dbReference>
<dbReference type="Gene3D" id="3.40.50.300">
    <property type="entry name" value="P-loop containing nucleotide triphosphate hydrolases"/>
    <property type="match status" value="1"/>
</dbReference>
<dbReference type="InterPro" id="IPR010766">
    <property type="entry name" value="DRTGG"/>
</dbReference>
<dbReference type="InterPro" id="IPR016475">
    <property type="entry name" value="P-Actrans_bac"/>
</dbReference>
<dbReference type="InterPro" id="IPR027417">
    <property type="entry name" value="P-loop_NTPase"/>
</dbReference>
<dbReference type="InterPro" id="IPR004614">
    <property type="entry name" value="P_AcTrfase"/>
</dbReference>
<dbReference type="InterPro" id="IPR042113">
    <property type="entry name" value="P_AcTrfase_dom1"/>
</dbReference>
<dbReference type="InterPro" id="IPR042112">
    <property type="entry name" value="P_AcTrfase_dom2"/>
</dbReference>
<dbReference type="InterPro" id="IPR050500">
    <property type="entry name" value="Phos_Acetyltrans/Butyryltrans"/>
</dbReference>
<dbReference type="InterPro" id="IPR002505">
    <property type="entry name" value="PTA_PTB"/>
</dbReference>
<dbReference type="InterPro" id="IPR028979">
    <property type="entry name" value="Ser_kin/Pase_Hpr-like_N_sf"/>
</dbReference>
<dbReference type="NCBIfam" id="NF004167">
    <property type="entry name" value="PRK05632.1"/>
    <property type="match status" value="1"/>
</dbReference>
<dbReference type="NCBIfam" id="NF007233">
    <property type="entry name" value="PRK09653.1"/>
    <property type="match status" value="1"/>
</dbReference>
<dbReference type="NCBIfam" id="TIGR00651">
    <property type="entry name" value="pta"/>
    <property type="match status" value="1"/>
</dbReference>
<dbReference type="PANTHER" id="PTHR43356">
    <property type="entry name" value="PHOSPHATE ACETYLTRANSFERASE"/>
    <property type="match status" value="1"/>
</dbReference>
<dbReference type="PANTHER" id="PTHR43356:SF3">
    <property type="entry name" value="PHOSPHATE ACETYLTRANSFERASE"/>
    <property type="match status" value="1"/>
</dbReference>
<dbReference type="Pfam" id="PF13500">
    <property type="entry name" value="AAA_26"/>
    <property type="match status" value="1"/>
</dbReference>
<dbReference type="Pfam" id="PF07085">
    <property type="entry name" value="DRTGG"/>
    <property type="match status" value="1"/>
</dbReference>
<dbReference type="Pfam" id="PF01515">
    <property type="entry name" value="PTA_PTB"/>
    <property type="match status" value="1"/>
</dbReference>
<dbReference type="PIRSF" id="PIRSF006107">
    <property type="entry name" value="PhpActrans_proteobac"/>
    <property type="match status" value="1"/>
</dbReference>
<dbReference type="SUPFAM" id="SSF75138">
    <property type="entry name" value="HprK N-terminal domain-like"/>
    <property type="match status" value="1"/>
</dbReference>
<dbReference type="SUPFAM" id="SSF53659">
    <property type="entry name" value="Isocitrate/Isopropylmalate dehydrogenase-like"/>
    <property type="match status" value="1"/>
</dbReference>
<dbReference type="SUPFAM" id="SSF52540">
    <property type="entry name" value="P-loop containing nucleoside triphosphate hydrolases"/>
    <property type="match status" value="1"/>
</dbReference>
<organism>
    <name type="scientific">Nitrosomonas europaea (strain ATCC 19718 / CIP 103999 / KCTC 2705 / NBRC 14298)</name>
    <dbReference type="NCBI Taxonomy" id="228410"/>
    <lineage>
        <taxon>Bacteria</taxon>
        <taxon>Pseudomonadati</taxon>
        <taxon>Pseudomonadota</taxon>
        <taxon>Betaproteobacteria</taxon>
        <taxon>Nitrosomonadales</taxon>
        <taxon>Nitrosomonadaceae</taxon>
        <taxon>Nitrosomonas</taxon>
    </lineage>
</organism>